<protein>
    <recommendedName>
        <fullName>Uncharacterized protein R793</fullName>
    </recommendedName>
</protein>
<sequence>MESNTDNYFIFCLYNSKYPHKAIVINENKCSPELSQKITDLKQLSSKIRCVIKDETDHYYVNDNPVENSSRELIDYWMNLLRLVEIDYDSDNFDTAFYDSLTYMYLSDQKYRLMSPNELQTRLSTTKKSDTNNVWCTIVSDVDFDYVPNIIFRYFIVKKSTTDIVSILSELKKVNGVLGINPAKKSSTELDCWGYLRVTSTEVMNRLLSEGFNCANGQIEFDFL</sequence>
<organism>
    <name type="scientific">Acanthamoeba polyphaga mimivirus</name>
    <name type="common">APMV</name>
    <dbReference type="NCBI Taxonomy" id="212035"/>
    <lineage>
        <taxon>Viruses</taxon>
        <taxon>Varidnaviria</taxon>
        <taxon>Bamfordvirae</taxon>
        <taxon>Nucleocytoviricota</taxon>
        <taxon>Megaviricetes</taxon>
        <taxon>Imitervirales</taxon>
        <taxon>Mimiviridae</taxon>
        <taxon>Megamimivirinae</taxon>
        <taxon>Mimivirus</taxon>
        <taxon>Mimivirus bradfordmassiliense</taxon>
    </lineage>
</organism>
<feature type="chain" id="PRO_0000253436" description="Uncharacterized protein R793">
    <location>
        <begin position="1"/>
        <end position="224"/>
    </location>
</feature>
<keyword id="KW-1185">Reference proteome</keyword>
<reference key="1">
    <citation type="journal article" date="2004" name="Science">
        <title>The 1.2-megabase genome sequence of Mimivirus.</title>
        <authorList>
            <person name="Raoult D."/>
            <person name="Audic S."/>
            <person name="Robert C."/>
            <person name="Abergel C."/>
            <person name="Renesto P."/>
            <person name="Ogata H."/>
            <person name="La Scola B."/>
            <person name="Susan M."/>
            <person name="Claverie J.-M."/>
        </authorList>
    </citation>
    <scope>NUCLEOTIDE SEQUENCE [LARGE SCALE GENOMIC DNA]</scope>
    <source>
        <strain>Rowbotham-Bradford</strain>
    </source>
</reference>
<accession>Q5UQ02</accession>
<gene>
    <name type="ordered locus">MIMI_R793</name>
</gene>
<organismHost>
    <name type="scientific">Acanthamoeba polyphaga</name>
    <name type="common">Amoeba</name>
    <dbReference type="NCBI Taxonomy" id="5757"/>
</organismHost>
<name>YR793_MIMIV</name>
<dbReference type="EMBL" id="AY653733">
    <property type="protein sequence ID" value="AAV51053.1"/>
    <property type="molecule type" value="Genomic_DNA"/>
</dbReference>
<dbReference type="KEGG" id="vg:9925454"/>
<dbReference type="OrthoDB" id="36984at10239"/>
<dbReference type="Proteomes" id="UP000001134">
    <property type="component" value="Genome"/>
</dbReference>
<proteinExistence type="predicted"/>